<protein>
    <recommendedName>
        <fullName evidence="1">Polyribonucleotide nucleotidyltransferase</fullName>
        <ecNumber evidence="1">2.7.7.8</ecNumber>
    </recommendedName>
    <alternativeName>
        <fullName evidence="1">Polynucleotide phosphorylase</fullName>
        <shortName evidence="1">PNPase</shortName>
    </alternativeName>
</protein>
<reference key="1">
    <citation type="journal article" date="2004" name="Nat. Genet.">
        <title>Comparison of genome degradation in Paratyphi A and Typhi, human-restricted serovars of Salmonella enterica that cause typhoid.</title>
        <authorList>
            <person name="McClelland M."/>
            <person name="Sanderson K.E."/>
            <person name="Clifton S.W."/>
            <person name="Latreille P."/>
            <person name="Porwollik S."/>
            <person name="Sabo A."/>
            <person name="Meyer R."/>
            <person name="Bieri T."/>
            <person name="Ozersky P."/>
            <person name="McLellan M."/>
            <person name="Harkins C.R."/>
            <person name="Wang C."/>
            <person name="Nguyen C."/>
            <person name="Berghoff A."/>
            <person name="Elliott G."/>
            <person name="Kohlberg S."/>
            <person name="Strong C."/>
            <person name="Du F."/>
            <person name="Carter J."/>
            <person name="Kremizki C."/>
            <person name="Layman D."/>
            <person name="Leonard S."/>
            <person name="Sun H."/>
            <person name="Fulton L."/>
            <person name="Nash W."/>
            <person name="Miner T."/>
            <person name="Minx P."/>
            <person name="Delehaunty K."/>
            <person name="Fronick C."/>
            <person name="Magrini V."/>
            <person name="Nhan M."/>
            <person name="Warren W."/>
            <person name="Florea L."/>
            <person name="Spieth J."/>
            <person name="Wilson R.K."/>
        </authorList>
    </citation>
    <scope>NUCLEOTIDE SEQUENCE [LARGE SCALE GENOMIC DNA]</scope>
    <source>
        <strain>ATCC 9150 / SARB42</strain>
    </source>
</reference>
<keyword id="KW-0963">Cytoplasm</keyword>
<keyword id="KW-0460">Magnesium</keyword>
<keyword id="KW-0479">Metal-binding</keyword>
<keyword id="KW-0548">Nucleotidyltransferase</keyword>
<keyword id="KW-0694">RNA-binding</keyword>
<keyword id="KW-0808">Transferase</keyword>
<organism>
    <name type="scientific">Salmonella paratyphi A (strain ATCC 9150 / SARB42)</name>
    <dbReference type="NCBI Taxonomy" id="295319"/>
    <lineage>
        <taxon>Bacteria</taxon>
        <taxon>Pseudomonadati</taxon>
        <taxon>Pseudomonadota</taxon>
        <taxon>Gammaproteobacteria</taxon>
        <taxon>Enterobacterales</taxon>
        <taxon>Enterobacteriaceae</taxon>
        <taxon>Salmonella</taxon>
    </lineage>
</organism>
<name>PNP_SALPA</name>
<evidence type="ECO:0000255" key="1">
    <source>
        <dbReference type="HAMAP-Rule" id="MF_01595"/>
    </source>
</evidence>
<evidence type="ECO:0000256" key="2">
    <source>
        <dbReference type="SAM" id="MobiDB-lite"/>
    </source>
</evidence>
<dbReference type="EC" id="2.7.7.8" evidence="1"/>
<dbReference type="EMBL" id="CP000026">
    <property type="protein sequence ID" value="AAV78977.1"/>
    <property type="molecule type" value="Genomic_DNA"/>
</dbReference>
<dbReference type="RefSeq" id="WP_001670767.1">
    <property type="nucleotide sequence ID" value="NC_006511.1"/>
</dbReference>
<dbReference type="SMR" id="Q5PL97"/>
<dbReference type="KEGG" id="spt:SPA3149"/>
<dbReference type="HOGENOM" id="CLU_004217_2_2_6"/>
<dbReference type="Proteomes" id="UP000008185">
    <property type="component" value="Chromosome"/>
</dbReference>
<dbReference type="GO" id="GO:0005829">
    <property type="term" value="C:cytosol"/>
    <property type="evidence" value="ECO:0007669"/>
    <property type="project" value="TreeGrafter"/>
</dbReference>
<dbReference type="GO" id="GO:0000175">
    <property type="term" value="F:3'-5'-RNA exonuclease activity"/>
    <property type="evidence" value="ECO:0007669"/>
    <property type="project" value="TreeGrafter"/>
</dbReference>
<dbReference type="GO" id="GO:0000287">
    <property type="term" value="F:magnesium ion binding"/>
    <property type="evidence" value="ECO:0007669"/>
    <property type="project" value="UniProtKB-UniRule"/>
</dbReference>
<dbReference type="GO" id="GO:0004654">
    <property type="term" value="F:polyribonucleotide nucleotidyltransferase activity"/>
    <property type="evidence" value="ECO:0007669"/>
    <property type="project" value="UniProtKB-UniRule"/>
</dbReference>
<dbReference type="GO" id="GO:0003723">
    <property type="term" value="F:RNA binding"/>
    <property type="evidence" value="ECO:0007669"/>
    <property type="project" value="UniProtKB-UniRule"/>
</dbReference>
<dbReference type="GO" id="GO:0006402">
    <property type="term" value="P:mRNA catabolic process"/>
    <property type="evidence" value="ECO:0007669"/>
    <property type="project" value="UniProtKB-UniRule"/>
</dbReference>
<dbReference type="GO" id="GO:0006396">
    <property type="term" value="P:RNA processing"/>
    <property type="evidence" value="ECO:0007669"/>
    <property type="project" value="InterPro"/>
</dbReference>
<dbReference type="CDD" id="cd02393">
    <property type="entry name" value="KH-I_PNPase"/>
    <property type="match status" value="1"/>
</dbReference>
<dbReference type="CDD" id="cd11363">
    <property type="entry name" value="RNase_PH_PNPase_1"/>
    <property type="match status" value="1"/>
</dbReference>
<dbReference type="CDD" id="cd11364">
    <property type="entry name" value="RNase_PH_PNPase_2"/>
    <property type="match status" value="1"/>
</dbReference>
<dbReference type="CDD" id="cd04472">
    <property type="entry name" value="S1_PNPase"/>
    <property type="match status" value="1"/>
</dbReference>
<dbReference type="FunFam" id="2.40.50.140:FF:000023">
    <property type="entry name" value="Polyribonucleotide nucleotidyltransferase"/>
    <property type="match status" value="1"/>
</dbReference>
<dbReference type="FunFam" id="3.30.1370.10:FF:000001">
    <property type="entry name" value="Polyribonucleotide nucleotidyltransferase"/>
    <property type="match status" value="1"/>
</dbReference>
<dbReference type="FunFam" id="3.30.230.70:FF:000001">
    <property type="entry name" value="Polyribonucleotide nucleotidyltransferase"/>
    <property type="match status" value="1"/>
</dbReference>
<dbReference type="FunFam" id="3.30.230.70:FF:000002">
    <property type="entry name" value="Polyribonucleotide nucleotidyltransferase"/>
    <property type="match status" value="1"/>
</dbReference>
<dbReference type="Gene3D" id="3.30.230.70">
    <property type="entry name" value="GHMP Kinase, N-terminal domain"/>
    <property type="match status" value="2"/>
</dbReference>
<dbReference type="Gene3D" id="3.30.1370.10">
    <property type="entry name" value="K Homology domain, type 1"/>
    <property type="match status" value="1"/>
</dbReference>
<dbReference type="Gene3D" id="2.40.50.140">
    <property type="entry name" value="Nucleic acid-binding proteins"/>
    <property type="match status" value="1"/>
</dbReference>
<dbReference type="HAMAP" id="MF_01595">
    <property type="entry name" value="PNPase"/>
    <property type="match status" value="1"/>
</dbReference>
<dbReference type="InterPro" id="IPR001247">
    <property type="entry name" value="ExoRNase_PH_dom1"/>
</dbReference>
<dbReference type="InterPro" id="IPR015847">
    <property type="entry name" value="ExoRNase_PH_dom2"/>
</dbReference>
<dbReference type="InterPro" id="IPR036345">
    <property type="entry name" value="ExoRNase_PH_dom2_sf"/>
</dbReference>
<dbReference type="InterPro" id="IPR004087">
    <property type="entry name" value="KH_dom"/>
</dbReference>
<dbReference type="InterPro" id="IPR004088">
    <property type="entry name" value="KH_dom_type_1"/>
</dbReference>
<dbReference type="InterPro" id="IPR036612">
    <property type="entry name" value="KH_dom_type_1_sf"/>
</dbReference>
<dbReference type="InterPro" id="IPR012340">
    <property type="entry name" value="NA-bd_OB-fold"/>
</dbReference>
<dbReference type="InterPro" id="IPR012162">
    <property type="entry name" value="PNPase"/>
</dbReference>
<dbReference type="InterPro" id="IPR027408">
    <property type="entry name" value="PNPase/RNase_PH_dom_sf"/>
</dbReference>
<dbReference type="InterPro" id="IPR015848">
    <property type="entry name" value="PNPase_PH_RNA-bd_bac/org-type"/>
</dbReference>
<dbReference type="InterPro" id="IPR036456">
    <property type="entry name" value="PNPase_PH_RNA-bd_sf"/>
</dbReference>
<dbReference type="InterPro" id="IPR020568">
    <property type="entry name" value="Ribosomal_Su5_D2-typ_SF"/>
</dbReference>
<dbReference type="InterPro" id="IPR003029">
    <property type="entry name" value="S1_domain"/>
</dbReference>
<dbReference type="NCBIfam" id="TIGR03591">
    <property type="entry name" value="polynuc_phos"/>
    <property type="match status" value="1"/>
</dbReference>
<dbReference type="NCBIfam" id="NF008805">
    <property type="entry name" value="PRK11824.1"/>
    <property type="match status" value="1"/>
</dbReference>
<dbReference type="PANTHER" id="PTHR11252">
    <property type="entry name" value="POLYRIBONUCLEOTIDE NUCLEOTIDYLTRANSFERASE"/>
    <property type="match status" value="1"/>
</dbReference>
<dbReference type="PANTHER" id="PTHR11252:SF0">
    <property type="entry name" value="POLYRIBONUCLEOTIDE NUCLEOTIDYLTRANSFERASE 1, MITOCHONDRIAL"/>
    <property type="match status" value="1"/>
</dbReference>
<dbReference type="Pfam" id="PF00013">
    <property type="entry name" value="KH_1"/>
    <property type="match status" value="1"/>
</dbReference>
<dbReference type="Pfam" id="PF03726">
    <property type="entry name" value="PNPase"/>
    <property type="match status" value="1"/>
</dbReference>
<dbReference type="Pfam" id="PF01138">
    <property type="entry name" value="RNase_PH"/>
    <property type="match status" value="2"/>
</dbReference>
<dbReference type="Pfam" id="PF03725">
    <property type="entry name" value="RNase_PH_C"/>
    <property type="match status" value="2"/>
</dbReference>
<dbReference type="Pfam" id="PF00575">
    <property type="entry name" value="S1"/>
    <property type="match status" value="1"/>
</dbReference>
<dbReference type="PIRSF" id="PIRSF005499">
    <property type="entry name" value="PNPase"/>
    <property type="match status" value="1"/>
</dbReference>
<dbReference type="SMART" id="SM00322">
    <property type="entry name" value="KH"/>
    <property type="match status" value="1"/>
</dbReference>
<dbReference type="SMART" id="SM00316">
    <property type="entry name" value="S1"/>
    <property type="match status" value="1"/>
</dbReference>
<dbReference type="SUPFAM" id="SSF54791">
    <property type="entry name" value="Eukaryotic type KH-domain (KH-domain type I)"/>
    <property type="match status" value="1"/>
</dbReference>
<dbReference type="SUPFAM" id="SSF50249">
    <property type="entry name" value="Nucleic acid-binding proteins"/>
    <property type="match status" value="1"/>
</dbReference>
<dbReference type="SUPFAM" id="SSF46915">
    <property type="entry name" value="Polynucleotide phosphorylase/guanosine pentaphosphate synthase (PNPase/GPSI), domain 3"/>
    <property type="match status" value="1"/>
</dbReference>
<dbReference type="SUPFAM" id="SSF55666">
    <property type="entry name" value="Ribonuclease PH domain 2-like"/>
    <property type="match status" value="2"/>
</dbReference>
<dbReference type="SUPFAM" id="SSF54211">
    <property type="entry name" value="Ribosomal protein S5 domain 2-like"/>
    <property type="match status" value="2"/>
</dbReference>
<dbReference type="PROSITE" id="PS50084">
    <property type="entry name" value="KH_TYPE_1"/>
    <property type="match status" value="1"/>
</dbReference>
<dbReference type="PROSITE" id="PS50126">
    <property type="entry name" value="S1"/>
    <property type="match status" value="1"/>
</dbReference>
<comment type="function">
    <text evidence="1">Involved in mRNA degradation. Catalyzes the phosphorolysis of single-stranded polyribonucleotides processively in the 3'- to 5'-direction.</text>
</comment>
<comment type="catalytic activity">
    <reaction evidence="1">
        <text>RNA(n+1) + phosphate = RNA(n) + a ribonucleoside 5'-diphosphate</text>
        <dbReference type="Rhea" id="RHEA:22096"/>
        <dbReference type="Rhea" id="RHEA-COMP:14527"/>
        <dbReference type="Rhea" id="RHEA-COMP:17342"/>
        <dbReference type="ChEBI" id="CHEBI:43474"/>
        <dbReference type="ChEBI" id="CHEBI:57930"/>
        <dbReference type="ChEBI" id="CHEBI:140395"/>
        <dbReference type="EC" id="2.7.7.8"/>
    </reaction>
</comment>
<comment type="cofactor">
    <cofactor evidence="1">
        <name>Mg(2+)</name>
        <dbReference type="ChEBI" id="CHEBI:18420"/>
    </cofactor>
</comment>
<comment type="subunit">
    <text evidence="1">Component of the RNA degradosome, which is a multiprotein complex involved in RNA processing and mRNA degradation.</text>
</comment>
<comment type="subcellular location">
    <subcellularLocation>
        <location evidence="1">Cytoplasm</location>
    </subcellularLocation>
</comment>
<comment type="similarity">
    <text evidence="1">Belongs to the polyribonucleotide nucleotidyltransferase family.</text>
</comment>
<sequence length="711" mass="77039">MLNPIVRKFQYGQHTVTLETGMMARQATAAVMVSMDDTAVFVTVVGQKKAKPGQDFFPLTVNYQERTYAAGRIPGSFFRREGRPSEGETLIARLIDRPVRPLFPEGFVNEVQVIATVVSVNPQVNPDIVAMIGASAALSLSGIPFNGPIGAARVGYINDQYVLNPTQDELKESKLDLVVAGTEAAVLMVESEAELLSEDTMLGAVVFGHEQQQVVIQAINDLVKEAGKPRWDWQPEAVNDALNARVAALAESRLSDAYRITDKQERYAQVDVIKSETIEQLIAEDETLDANELGEILHAIEKNVVRSRVLAGEPRIDGREKDMIRGLDVRTGVLPRTHGSALFTRGETQALVTATLGTARDAQVLDELMGERTDSFLFHYNFPPYSVGETGMVGSPKRREIGHGRLAKRGVLAVMPDMDKFPYTVRVVSEITESNGSSSMASVCGASLALMDAGVPIKAAVAGIAMGLVKEGDNYVVLSDILGDEDHLGDMDFKVAGSRDGISALQMDIKIEGITKEIMQVALNQAKGARLHILGVMEQAINAPRGDISEFAPRIHTIKISTDKIKDVIGKGGSVIRALTEETGTTIEIEDDGTVKIAATDGEKAKYAIRRIEEITAEIEVGRIYNGKVTRIVDFGAFVAIGGGKEGLVHISQIADKRVEKVTDYLQMGQEVPVKVLEVDRQGRVRLSIKEATEQSQPAAAPEAPASEQAE</sequence>
<accession>Q5PL97</accession>
<gene>
    <name evidence="1" type="primary">pnp</name>
    <name type="ordered locus">SPA3149</name>
</gene>
<feature type="chain" id="PRO_0000329831" description="Polyribonucleotide nucleotidyltransferase">
    <location>
        <begin position="1"/>
        <end position="711"/>
    </location>
</feature>
<feature type="domain" description="KH" evidence="1">
    <location>
        <begin position="553"/>
        <end position="612"/>
    </location>
</feature>
<feature type="domain" description="S1 motif" evidence="1">
    <location>
        <begin position="622"/>
        <end position="690"/>
    </location>
</feature>
<feature type="region of interest" description="Disordered" evidence="2">
    <location>
        <begin position="690"/>
        <end position="711"/>
    </location>
</feature>
<feature type="compositionally biased region" description="Low complexity" evidence="2">
    <location>
        <begin position="694"/>
        <end position="711"/>
    </location>
</feature>
<feature type="binding site" evidence="1">
    <location>
        <position position="486"/>
    </location>
    <ligand>
        <name>Mg(2+)</name>
        <dbReference type="ChEBI" id="CHEBI:18420"/>
    </ligand>
</feature>
<feature type="binding site" evidence="1">
    <location>
        <position position="492"/>
    </location>
    <ligand>
        <name>Mg(2+)</name>
        <dbReference type="ChEBI" id="CHEBI:18420"/>
    </ligand>
</feature>
<proteinExistence type="inferred from homology"/>